<feature type="chain" id="PRO_0000229574" description="Small ribosomal subunit protein bS6">
    <location>
        <begin position="1"/>
        <end position="131"/>
    </location>
</feature>
<feature type="region of interest" description="Disordered" evidence="2">
    <location>
        <begin position="98"/>
        <end position="131"/>
    </location>
</feature>
<feature type="compositionally biased region" description="Basic and acidic residues" evidence="2">
    <location>
        <begin position="104"/>
        <end position="116"/>
    </location>
</feature>
<feature type="compositionally biased region" description="Acidic residues" evidence="2">
    <location>
        <begin position="120"/>
        <end position="131"/>
    </location>
</feature>
<accession>Q57GJ1</accession>
<gene>
    <name evidence="1" type="primary">rpsF</name>
    <name type="ordered locus">SCH_4265</name>
</gene>
<dbReference type="EMBL" id="AE017220">
    <property type="protein sequence ID" value="AAX68171.1"/>
    <property type="molecule type" value="Genomic_DNA"/>
</dbReference>
<dbReference type="RefSeq" id="WP_001216673.1">
    <property type="nucleotide sequence ID" value="NC_006905.1"/>
</dbReference>
<dbReference type="SMR" id="Q57GJ1"/>
<dbReference type="GeneID" id="92804768"/>
<dbReference type="KEGG" id="sec:SCH_4265"/>
<dbReference type="HOGENOM" id="CLU_113441_6_1_6"/>
<dbReference type="Proteomes" id="UP000000538">
    <property type="component" value="Chromosome"/>
</dbReference>
<dbReference type="GO" id="GO:0022627">
    <property type="term" value="C:cytosolic small ribosomal subunit"/>
    <property type="evidence" value="ECO:0007669"/>
    <property type="project" value="TreeGrafter"/>
</dbReference>
<dbReference type="GO" id="GO:0070181">
    <property type="term" value="F:small ribosomal subunit rRNA binding"/>
    <property type="evidence" value="ECO:0007669"/>
    <property type="project" value="TreeGrafter"/>
</dbReference>
<dbReference type="GO" id="GO:0003735">
    <property type="term" value="F:structural constituent of ribosome"/>
    <property type="evidence" value="ECO:0007669"/>
    <property type="project" value="InterPro"/>
</dbReference>
<dbReference type="GO" id="GO:0006412">
    <property type="term" value="P:translation"/>
    <property type="evidence" value="ECO:0007669"/>
    <property type="project" value="UniProtKB-UniRule"/>
</dbReference>
<dbReference type="CDD" id="cd00473">
    <property type="entry name" value="bS6"/>
    <property type="match status" value="1"/>
</dbReference>
<dbReference type="FunFam" id="3.30.70.60:FF:000003">
    <property type="entry name" value="30S ribosomal protein S6"/>
    <property type="match status" value="1"/>
</dbReference>
<dbReference type="Gene3D" id="3.30.70.60">
    <property type="match status" value="1"/>
</dbReference>
<dbReference type="HAMAP" id="MF_00360">
    <property type="entry name" value="Ribosomal_bS6"/>
    <property type="match status" value="1"/>
</dbReference>
<dbReference type="InterPro" id="IPR000529">
    <property type="entry name" value="Ribosomal_bS6"/>
</dbReference>
<dbReference type="InterPro" id="IPR020815">
    <property type="entry name" value="Ribosomal_bS6_CS"/>
</dbReference>
<dbReference type="InterPro" id="IPR035980">
    <property type="entry name" value="Ribosomal_bS6_sf"/>
</dbReference>
<dbReference type="InterPro" id="IPR020814">
    <property type="entry name" value="Ribosomal_S6_plastid/chlpt"/>
</dbReference>
<dbReference type="InterPro" id="IPR014717">
    <property type="entry name" value="Transl_elong_EF1B/ribsomal_bS6"/>
</dbReference>
<dbReference type="NCBIfam" id="TIGR00166">
    <property type="entry name" value="S6"/>
    <property type="match status" value="1"/>
</dbReference>
<dbReference type="PANTHER" id="PTHR21011">
    <property type="entry name" value="MITOCHONDRIAL 28S RIBOSOMAL PROTEIN S6"/>
    <property type="match status" value="1"/>
</dbReference>
<dbReference type="PANTHER" id="PTHR21011:SF1">
    <property type="entry name" value="SMALL RIBOSOMAL SUBUNIT PROTEIN BS6M"/>
    <property type="match status" value="1"/>
</dbReference>
<dbReference type="Pfam" id="PF01250">
    <property type="entry name" value="Ribosomal_S6"/>
    <property type="match status" value="1"/>
</dbReference>
<dbReference type="SUPFAM" id="SSF54995">
    <property type="entry name" value="Ribosomal protein S6"/>
    <property type="match status" value="1"/>
</dbReference>
<dbReference type="PROSITE" id="PS01048">
    <property type="entry name" value="RIBOSOMAL_S6"/>
    <property type="match status" value="1"/>
</dbReference>
<keyword id="KW-0687">Ribonucleoprotein</keyword>
<keyword id="KW-0689">Ribosomal protein</keyword>
<keyword id="KW-0694">RNA-binding</keyword>
<keyword id="KW-0699">rRNA-binding</keyword>
<comment type="function">
    <text evidence="1">Binds together with bS18 to 16S ribosomal RNA.</text>
</comment>
<comment type="similarity">
    <text evidence="1">Belongs to the bacterial ribosomal protein bS6 family.</text>
</comment>
<proteinExistence type="inferred from homology"/>
<sequence length="131" mass="15173">MRHYEIVFMVHPDQSEQVPGMIERYSAAITGAEGKIHRLEDWGRRQLAYPINKLHKAHYVLMNVEAPQEVIDELETTFRFNDAVIRSMVMRTKHAVTEASPMVKAKDERRERRDDFANETADDAEAGDSEE</sequence>
<protein>
    <recommendedName>
        <fullName evidence="1">Small ribosomal subunit protein bS6</fullName>
    </recommendedName>
    <alternativeName>
        <fullName evidence="3">30S ribosomal protein S6</fullName>
    </alternativeName>
</protein>
<name>RS6_SALCH</name>
<organism>
    <name type="scientific">Salmonella choleraesuis (strain SC-B67)</name>
    <dbReference type="NCBI Taxonomy" id="321314"/>
    <lineage>
        <taxon>Bacteria</taxon>
        <taxon>Pseudomonadati</taxon>
        <taxon>Pseudomonadota</taxon>
        <taxon>Gammaproteobacteria</taxon>
        <taxon>Enterobacterales</taxon>
        <taxon>Enterobacteriaceae</taxon>
        <taxon>Salmonella</taxon>
    </lineage>
</organism>
<evidence type="ECO:0000255" key="1">
    <source>
        <dbReference type="HAMAP-Rule" id="MF_00360"/>
    </source>
</evidence>
<evidence type="ECO:0000256" key="2">
    <source>
        <dbReference type="SAM" id="MobiDB-lite"/>
    </source>
</evidence>
<evidence type="ECO:0000305" key="3"/>
<reference key="1">
    <citation type="journal article" date="2005" name="Nucleic Acids Res.">
        <title>The genome sequence of Salmonella enterica serovar Choleraesuis, a highly invasive and resistant zoonotic pathogen.</title>
        <authorList>
            <person name="Chiu C.-H."/>
            <person name="Tang P."/>
            <person name="Chu C."/>
            <person name="Hu S."/>
            <person name="Bao Q."/>
            <person name="Yu J."/>
            <person name="Chou Y.-Y."/>
            <person name="Wang H.-S."/>
            <person name="Lee Y.-S."/>
        </authorList>
    </citation>
    <scope>NUCLEOTIDE SEQUENCE [LARGE SCALE GENOMIC DNA]</scope>
    <source>
        <strain>SC-B67</strain>
    </source>
</reference>